<feature type="chain" id="PRO_0000089042" description="Actin-103">
    <location>
        <begin position="1" status="less than"/>
        <end position="336" status="greater than"/>
    </location>
</feature>
<feature type="non-terminal residue">
    <location>
        <position position="1"/>
    </location>
</feature>
<feature type="non-terminal residue">
    <location>
        <position position="336"/>
    </location>
</feature>
<protein>
    <recommendedName>
        <fullName>Actin-103</fullName>
        <ecNumber evidence="1">3.6.4.-</ecNumber>
    </recommendedName>
</protein>
<evidence type="ECO:0000250" key="1">
    <source>
        <dbReference type="UniProtKB" id="P68137"/>
    </source>
</evidence>
<evidence type="ECO:0000305" key="2"/>
<keyword id="KW-0067">ATP-binding</keyword>
<keyword id="KW-0963">Cytoplasm</keyword>
<keyword id="KW-0206">Cytoskeleton</keyword>
<keyword id="KW-0378">Hydrolase</keyword>
<keyword id="KW-0547">Nucleotide-binding</keyword>
<keyword id="KW-1185">Reference proteome</keyword>
<name>ACT6_TOBAC</name>
<organism>
    <name type="scientific">Nicotiana tabacum</name>
    <name type="common">Common tobacco</name>
    <dbReference type="NCBI Taxonomy" id="4097"/>
    <lineage>
        <taxon>Eukaryota</taxon>
        <taxon>Viridiplantae</taxon>
        <taxon>Streptophyta</taxon>
        <taxon>Embryophyta</taxon>
        <taxon>Tracheophyta</taxon>
        <taxon>Spermatophyta</taxon>
        <taxon>Magnoliopsida</taxon>
        <taxon>eudicotyledons</taxon>
        <taxon>Gunneridae</taxon>
        <taxon>Pentapetalae</taxon>
        <taxon>asterids</taxon>
        <taxon>lamiids</taxon>
        <taxon>Solanales</taxon>
        <taxon>Solanaceae</taxon>
        <taxon>Nicotianoideae</taxon>
        <taxon>Nicotianeae</taxon>
        <taxon>Nicotiana</taxon>
    </lineage>
</organism>
<proteinExistence type="inferred from homology"/>
<dbReference type="EC" id="3.6.4.-" evidence="1"/>
<dbReference type="EMBL" id="U60495">
    <property type="protein sequence ID" value="AAB40091.1"/>
    <property type="molecule type" value="Genomic_DNA"/>
</dbReference>
<dbReference type="SMR" id="P93376"/>
<dbReference type="STRING" id="4097.P93376"/>
<dbReference type="PaxDb" id="4097-P93376"/>
<dbReference type="Proteomes" id="UP000084051">
    <property type="component" value="Unplaced"/>
</dbReference>
<dbReference type="GO" id="GO:0015629">
    <property type="term" value="C:actin cytoskeleton"/>
    <property type="evidence" value="ECO:0000318"/>
    <property type="project" value="GO_Central"/>
</dbReference>
<dbReference type="GO" id="GO:0005829">
    <property type="term" value="C:cytosol"/>
    <property type="evidence" value="ECO:0000318"/>
    <property type="project" value="GO_Central"/>
</dbReference>
<dbReference type="GO" id="GO:0005524">
    <property type="term" value="F:ATP binding"/>
    <property type="evidence" value="ECO:0007669"/>
    <property type="project" value="UniProtKB-KW"/>
</dbReference>
<dbReference type="GO" id="GO:0016787">
    <property type="term" value="F:hydrolase activity"/>
    <property type="evidence" value="ECO:0007669"/>
    <property type="project" value="UniProtKB-KW"/>
</dbReference>
<dbReference type="GO" id="GO:0051301">
    <property type="term" value="P:cell division"/>
    <property type="evidence" value="ECO:0000318"/>
    <property type="project" value="GO_Central"/>
</dbReference>
<dbReference type="CDD" id="cd10224">
    <property type="entry name" value="ASKHA_NBD_actin"/>
    <property type="match status" value="1"/>
</dbReference>
<dbReference type="FunFam" id="2.30.36.70:FF:000001">
    <property type="entry name" value="Actin, alpha skeletal muscle"/>
    <property type="match status" value="1"/>
</dbReference>
<dbReference type="FunFam" id="3.30.420.40:FF:000291">
    <property type="entry name" value="Actin, alpha skeletal muscle"/>
    <property type="match status" value="1"/>
</dbReference>
<dbReference type="FunFam" id="3.90.640.10:FF:000001">
    <property type="entry name" value="Actin, muscle"/>
    <property type="match status" value="1"/>
</dbReference>
<dbReference type="FunFam" id="3.30.420.40:FF:000404">
    <property type="entry name" value="Major actin"/>
    <property type="match status" value="1"/>
</dbReference>
<dbReference type="Gene3D" id="3.30.420.40">
    <property type="match status" value="2"/>
</dbReference>
<dbReference type="Gene3D" id="3.90.640.10">
    <property type="entry name" value="Actin, Chain A, domain 4"/>
    <property type="match status" value="1"/>
</dbReference>
<dbReference type="InterPro" id="IPR004000">
    <property type="entry name" value="Actin"/>
</dbReference>
<dbReference type="InterPro" id="IPR020902">
    <property type="entry name" value="Actin/actin-like_CS"/>
</dbReference>
<dbReference type="InterPro" id="IPR004001">
    <property type="entry name" value="Actin_CS"/>
</dbReference>
<dbReference type="InterPro" id="IPR043129">
    <property type="entry name" value="ATPase_NBD"/>
</dbReference>
<dbReference type="PANTHER" id="PTHR11937">
    <property type="entry name" value="ACTIN"/>
    <property type="match status" value="1"/>
</dbReference>
<dbReference type="Pfam" id="PF00022">
    <property type="entry name" value="Actin"/>
    <property type="match status" value="1"/>
</dbReference>
<dbReference type="PRINTS" id="PR00190">
    <property type="entry name" value="ACTIN"/>
</dbReference>
<dbReference type="SMART" id="SM00268">
    <property type="entry name" value="ACTIN"/>
    <property type="match status" value="1"/>
</dbReference>
<dbReference type="SUPFAM" id="SSF53067">
    <property type="entry name" value="Actin-like ATPase domain"/>
    <property type="match status" value="2"/>
</dbReference>
<dbReference type="PROSITE" id="PS00406">
    <property type="entry name" value="ACTINS_1"/>
    <property type="match status" value="1"/>
</dbReference>
<dbReference type="PROSITE" id="PS01132">
    <property type="entry name" value="ACTINS_ACT_LIKE"/>
    <property type="match status" value="1"/>
</dbReference>
<sequence length="336" mass="37224">AGFAGDDAPRAVFPSIVGHPRHTGVMVGMGQKDAYVGDEAQSKRGILTLKYPIEHGIVSNWDDMEKIWHHTFYNELRVAHEEHPVLLTEAPLNPKANREKMTQIMFETFNVPAMYVAIQAVLSLYASGRTTGIVLDSGDGVSHTVPIYEGYALPHAILRLDLAGRDLTDNLMKILTERGYMFTTTAEREIVRDMKEELAYVALDYEQELDTAKSSSSVEKNYELPDGQVITIGAERFRCPEVLFQPSMIGMEAAGIHETTYNSIMKCDVDIRKDLYGNIVLSGGSTMFPGIADRMSKEITALAPSSMKIKVVAPPERKYSVWIGGSILASLSTFQQ</sequence>
<reference key="1">
    <citation type="journal article" date="1996" name="Mol. Biol. Evol.">
        <title>Phylogeny and substitution rates of angiosperm actin genes.</title>
        <authorList>
            <person name="Moniz de Sa M."/>
            <person name="Drouin G."/>
        </authorList>
    </citation>
    <scope>NUCLEOTIDE SEQUENCE [GENOMIC DNA]</scope>
</reference>
<accession>P93376</accession>
<comment type="function">
    <text>Actins are highly conserved proteins that are involved in various types of cell motility and are ubiquitously expressed in all eukaryotic cells. Essential component of cell cytoskeleton; plays an important role in cytoplasmic streaming, cell shape determination, cell division, organelle movement and extension growth.</text>
</comment>
<comment type="catalytic activity">
    <reaction evidence="1">
        <text>ATP + H2O = ADP + phosphate + H(+)</text>
        <dbReference type="Rhea" id="RHEA:13065"/>
        <dbReference type="ChEBI" id="CHEBI:15377"/>
        <dbReference type="ChEBI" id="CHEBI:15378"/>
        <dbReference type="ChEBI" id="CHEBI:30616"/>
        <dbReference type="ChEBI" id="CHEBI:43474"/>
        <dbReference type="ChEBI" id="CHEBI:456216"/>
    </reaction>
</comment>
<comment type="subcellular location">
    <subcellularLocation>
        <location>Cytoplasm</location>
        <location>Cytoskeleton</location>
    </subcellularLocation>
</comment>
<comment type="miscellaneous">
    <text>There are at least 7 different actin genes in tobacco.</text>
</comment>
<comment type="similarity">
    <text evidence="2">Belongs to the actin family.</text>
</comment>